<name>EFTS_PSEPF</name>
<sequence>MAAITAALVKELRERTGEGMMDCKKALEKAGGDIEKAIDDMRASGAIKAAKKAGNVAAEGAIAIKDDGKAAVLIEVNSQTDFLALQDDFKNFVAASVDKAFADKLTDAAPLIAAQEAAREALVAKVGENVNIRRLVRVEGDVVGTYLHGNKIGVAVVLKGGDVELAKDIAMHVAASNPEFLLPSQVSDEAIEREKAVFLQLNEEKIKGKPENIVENMVKGRISKFLAEASLVEQAFVKNPEIKVGELAKKGGAEIVSFTYFKVGEGIEKPVDNFAEEVAAQLAAAKQ</sequence>
<feature type="chain" id="PRO_0000241509" description="Elongation factor Ts">
    <location>
        <begin position="1"/>
        <end position="287"/>
    </location>
</feature>
<feature type="region of interest" description="Involved in Mg(2+) ion dislocation from EF-Tu" evidence="1">
    <location>
        <begin position="80"/>
        <end position="83"/>
    </location>
</feature>
<protein>
    <recommendedName>
        <fullName evidence="1">Elongation factor Ts</fullName>
        <shortName evidence="1">EF-Ts</shortName>
    </recommendedName>
</protein>
<reference key="1">
    <citation type="journal article" date="2009" name="Genome Biol.">
        <title>Genomic and genetic analyses of diversity and plant interactions of Pseudomonas fluorescens.</title>
        <authorList>
            <person name="Silby M.W."/>
            <person name="Cerdeno-Tarraga A.M."/>
            <person name="Vernikos G.S."/>
            <person name="Giddens S.R."/>
            <person name="Jackson R.W."/>
            <person name="Preston G.M."/>
            <person name="Zhang X.-X."/>
            <person name="Moon C.D."/>
            <person name="Gehrig S.M."/>
            <person name="Godfrey S.A.C."/>
            <person name="Knight C.G."/>
            <person name="Malone J.G."/>
            <person name="Robinson Z."/>
            <person name="Spiers A.J."/>
            <person name="Harris S."/>
            <person name="Challis G.L."/>
            <person name="Yaxley A.M."/>
            <person name="Harris D."/>
            <person name="Seeger K."/>
            <person name="Murphy L."/>
            <person name="Rutter S."/>
            <person name="Squares R."/>
            <person name="Quail M.A."/>
            <person name="Saunders E."/>
            <person name="Mavromatis K."/>
            <person name="Brettin T.S."/>
            <person name="Bentley S.D."/>
            <person name="Hothersall J."/>
            <person name="Stephens E."/>
            <person name="Thomas C.M."/>
            <person name="Parkhill J."/>
            <person name="Levy S.B."/>
            <person name="Rainey P.B."/>
            <person name="Thomson N.R."/>
        </authorList>
    </citation>
    <scope>NUCLEOTIDE SEQUENCE [LARGE SCALE GENOMIC DNA]</scope>
    <source>
        <strain>Pf0-1</strain>
    </source>
</reference>
<gene>
    <name evidence="1" type="primary">tsf</name>
    <name type="ordered locus">Pfl01_1102</name>
</gene>
<evidence type="ECO:0000255" key="1">
    <source>
        <dbReference type="HAMAP-Rule" id="MF_00050"/>
    </source>
</evidence>
<dbReference type="EMBL" id="CP000094">
    <property type="protein sequence ID" value="ABA72845.1"/>
    <property type="molecule type" value="Genomic_DNA"/>
</dbReference>
<dbReference type="RefSeq" id="WP_011332682.1">
    <property type="nucleotide sequence ID" value="NC_007492.2"/>
</dbReference>
<dbReference type="SMR" id="Q3KHB1"/>
<dbReference type="KEGG" id="pfo:Pfl01_1102"/>
<dbReference type="eggNOG" id="COG0264">
    <property type="taxonomic scope" value="Bacteria"/>
</dbReference>
<dbReference type="HOGENOM" id="CLU_047155_0_2_6"/>
<dbReference type="Proteomes" id="UP000002704">
    <property type="component" value="Chromosome"/>
</dbReference>
<dbReference type="GO" id="GO:0005737">
    <property type="term" value="C:cytoplasm"/>
    <property type="evidence" value="ECO:0007669"/>
    <property type="project" value="UniProtKB-SubCell"/>
</dbReference>
<dbReference type="GO" id="GO:0003746">
    <property type="term" value="F:translation elongation factor activity"/>
    <property type="evidence" value="ECO:0007669"/>
    <property type="project" value="UniProtKB-UniRule"/>
</dbReference>
<dbReference type="CDD" id="cd14275">
    <property type="entry name" value="UBA_EF-Ts"/>
    <property type="match status" value="1"/>
</dbReference>
<dbReference type="FunFam" id="1.10.286.20:FF:000001">
    <property type="entry name" value="Elongation factor Ts"/>
    <property type="match status" value="1"/>
</dbReference>
<dbReference type="FunFam" id="1.10.8.10:FF:000001">
    <property type="entry name" value="Elongation factor Ts"/>
    <property type="match status" value="1"/>
</dbReference>
<dbReference type="Gene3D" id="1.10.286.20">
    <property type="match status" value="1"/>
</dbReference>
<dbReference type="Gene3D" id="1.10.8.10">
    <property type="entry name" value="DNA helicase RuvA subunit, C-terminal domain"/>
    <property type="match status" value="1"/>
</dbReference>
<dbReference type="Gene3D" id="3.30.479.20">
    <property type="entry name" value="Elongation factor Ts, dimerisation domain"/>
    <property type="match status" value="2"/>
</dbReference>
<dbReference type="HAMAP" id="MF_00050">
    <property type="entry name" value="EF_Ts"/>
    <property type="match status" value="1"/>
</dbReference>
<dbReference type="InterPro" id="IPR036402">
    <property type="entry name" value="EF-Ts_dimer_sf"/>
</dbReference>
<dbReference type="InterPro" id="IPR001816">
    <property type="entry name" value="Transl_elong_EFTs/EF1B"/>
</dbReference>
<dbReference type="InterPro" id="IPR014039">
    <property type="entry name" value="Transl_elong_EFTs/EF1B_dimer"/>
</dbReference>
<dbReference type="InterPro" id="IPR018101">
    <property type="entry name" value="Transl_elong_Ts_CS"/>
</dbReference>
<dbReference type="InterPro" id="IPR009060">
    <property type="entry name" value="UBA-like_sf"/>
</dbReference>
<dbReference type="NCBIfam" id="TIGR00116">
    <property type="entry name" value="tsf"/>
    <property type="match status" value="1"/>
</dbReference>
<dbReference type="PANTHER" id="PTHR11741">
    <property type="entry name" value="ELONGATION FACTOR TS"/>
    <property type="match status" value="1"/>
</dbReference>
<dbReference type="PANTHER" id="PTHR11741:SF0">
    <property type="entry name" value="ELONGATION FACTOR TS, MITOCHONDRIAL"/>
    <property type="match status" value="1"/>
</dbReference>
<dbReference type="Pfam" id="PF00889">
    <property type="entry name" value="EF_TS"/>
    <property type="match status" value="1"/>
</dbReference>
<dbReference type="SUPFAM" id="SSF54713">
    <property type="entry name" value="Elongation factor Ts (EF-Ts), dimerisation domain"/>
    <property type="match status" value="2"/>
</dbReference>
<dbReference type="SUPFAM" id="SSF46934">
    <property type="entry name" value="UBA-like"/>
    <property type="match status" value="1"/>
</dbReference>
<dbReference type="PROSITE" id="PS01126">
    <property type="entry name" value="EF_TS_1"/>
    <property type="match status" value="1"/>
</dbReference>
<dbReference type="PROSITE" id="PS01127">
    <property type="entry name" value="EF_TS_2"/>
    <property type="match status" value="1"/>
</dbReference>
<organism>
    <name type="scientific">Pseudomonas fluorescens (strain Pf0-1)</name>
    <dbReference type="NCBI Taxonomy" id="205922"/>
    <lineage>
        <taxon>Bacteria</taxon>
        <taxon>Pseudomonadati</taxon>
        <taxon>Pseudomonadota</taxon>
        <taxon>Gammaproteobacteria</taxon>
        <taxon>Pseudomonadales</taxon>
        <taxon>Pseudomonadaceae</taxon>
        <taxon>Pseudomonas</taxon>
    </lineage>
</organism>
<proteinExistence type="inferred from homology"/>
<keyword id="KW-0963">Cytoplasm</keyword>
<keyword id="KW-0251">Elongation factor</keyword>
<keyword id="KW-0648">Protein biosynthesis</keyword>
<comment type="function">
    <text evidence="1">Associates with the EF-Tu.GDP complex and induces the exchange of GDP to GTP. It remains bound to the aminoacyl-tRNA.EF-Tu.GTP complex up to the GTP hydrolysis stage on the ribosome.</text>
</comment>
<comment type="subcellular location">
    <subcellularLocation>
        <location evidence="1">Cytoplasm</location>
    </subcellularLocation>
</comment>
<comment type="similarity">
    <text evidence="1">Belongs to the EF-Ts family.</text>
</comment>
<accession>Q3KHB1</accession>